<reference key="1">
    <citation type="journal article" date="2021" name="Toxicon">
        <title>Venom composition of the endoparasitoid wasp Cotesia flavipes (Hymenoptera: Braconidae) and functional characterization of a major venom peptide.</title>
        <authorList>
            <person name="Pinto C.P.G."/>
            <person name="Walker A.A."/>
            <person name="Robinson S.D."/>
            <person name="Chin Y.K."/>
            <person name="King G.F."/>
            <person name="Rossi G.D."/>
        </authorList>
    </citation>
    <scope>NUCLEOTIDE SEQUENCE [MRNA]</scope>
    <scope>FUNCTION</scope>
    <scope>SYNTHESIS OF 22-54</scope>
    <scope>BIOTECHNOLOGY</scope>
</reference>
<comment type="function">
    <text evidence="2">This endoparasitoid wasp peptide has a role in disruption of the cellular host immune response, since it reduces the capacity of D.saccharalis hemocytes to encapsulate foreign bodies. On the other hand, it shows no effect on the humoral immune response, since it has no effect on phenoloxidase activity.</text>
</comment>
<comment type="subcellular location">
    <subcellularLocation>
        <location evidence="5">Secreted</location>
    </subcellularLocation>
</comment>
<comment type="tissue specificity">
    <text evidence="5">Expressed by the venom duct.</text>
</comment>
<comment type="domain">
    <text evidence="4">The presence of a 'disulfide through disulfide knot' structurally defines this protein as a knottin.</text>
</comment>
<comment type="biotechnology">
    <text evidence="2">Potential candidate for insect pest control through ingestion. Feeding leaves coated with this peptide to neonate D.saccharalis result in increased mortality and significantly reduced feeding compared to caterpillars fed untreated leaves.</text>
</comment>
<comment type="miscellaneous">
    <text evidence="2">Highly abundant in venom.</text>
</comment>
<protein>
    <recommendedName>
        <fullName evidence="3">H-bracotoxin-Cf4</fullName>
        <shortName evidence="3">H-BCTX-Cf4</shortName>
    </recommendedName>
</protein>
<sequence length="54" mass="5740">MSKLFIFFLLVALLAFVSSEAAECVAKGQNCIVGKSTCCIGQCIIKDHVLGSCE</sequence>
<evidence type="ECO:0000255" key="1"/>
<evidence type="ECO:0000269" key="2">
    <source>
    </source>
</evidence>
<evidence type="ECO:0000303" key="3">
    <source>
    </source>
</evidence>
<evidence type="ECO:0000305" key="4"/>
<evidence type="ECO:0000305" key="5">
    <source>
    </source>
</evidence>
<organism>
    <name type="scientific">Cotesia flavipes</name>
    <name type="common">Parasitic wasp</name>
    <name type="synonym">Apanteles flavipes</name>
    <dbReference type="NCBI Taxonomy" id="89805"/>
    <lineage>
        <taxon>Eukaryota</taxon>
        <taxon>Metazoa</taxon>
        <taxon>Ecdysozoa</taxon>
        <taxon>Arthropoda</taxon>
        <taxon>Hexapoda</taxon>
        <taxon>Insecta</taxon>
        <taxon>Pterygota</taxon>
        <taxon>Neoptera</taxon>
        <taxon>Endopterygota</taxon>
        <taxon>Hymenoptera</taxon>
        <taxon>Apocrita</taxon>
        <taxon>Ichneumonoidea</taxon>
        <taxon>Braconidae</taxon>
        <taxon>Microgastrinae</taxon>
        <taxon>Cotesia</taxon>
    </lineage>
</organism>
<dbReference type="EMBL" id="MZ442218">
    <property type="protein sequence ID" value="UEP64248.1"/>
    <property type="molecule type" value="mRNA"/>
</dbReference>
<dbReference type="GO" id="GO:0005576">
    <property type="term" value="C:extracellular region"/>
    <property type="evidence" value="ECO:0007669"/>
    <property type="project" value="UniProtKB-SubCell"/>
</dbReference>
<name>CF4_COTFL</name>
<proteinExistence type="evidence at protein level"/>
<accession>P0DQT4</accession>
<keyword id="KW-1015">Disulfide bond</keyword>
<keyword id="KW-0960">Knottin</keyword>
<keyword id="KW-0964">Secreted</keyword>
<keyword id="KW-0732">Signal</keyword>
<feature type="signal peptide" evidence="1">
    <location>
        <begin position="1"/>
        <end position="21"/>
    </location>
</feature>
<feature type="chain" id="PRO_0000455164" description="H-bracotoxin-Cf4" evidence="5">
    <location>
        <begin position="22"/>
        <end position="54"/>
    </location>
</feature>
<feature type="disulfide bond" evidence="5">
    <location>
        <begin position="24"/>
        <end position="39"/>
    </location>
</feature>
<feature type="disulfide bond" evidence="5">
    <location>
        <begin position="31"/>
        <end position="43"/>
    </location>
</feature>
<feature type="disulfide bond" evidence="5">
    <location>
        <begin position="38"/>
        <end position="53"/>
    </location>
</feature>